<name>PETN_PHATC</name>
<gene>
    <name evidence="1" type="primary">petN</name>
</gene>
<protein>
    <recommendedName>
        <fullName evidence="1">Cytochrome b6-f complex subunit 8</fullName>
    </recommendedName>
    <alternativeName>
        <fullName evidence="1">Cytochrome b6-f complex subunit PetN</fullName>
    </alternativeName>
    <alternativeName>
        <fullName evidence="1">Cytochrome b6-f complex subunit VIII</fullName>
    </alternativeName>
</protein>
<feature type="chain" id="PRO_0000275572" description="Cytochrome b6-f complex subunit 8">
    <location>
        <begin position="1"/>
        <end position="29"/>
    </location>
</feature>
<feature type="transmembrane region" description="Helical" evidence="1">
    <location>
        <begin position="3"/>
        <end position="23"/>
    </location>
</feature>
<organism>
    <name type="scientific">Phaeodactylum tricornutum (strain CCAP 1055/1)</name>
    <dbReference type="NCBI Taxonomy" id="556484"/>
    <lineage>
        <taxon>Eukaryota</taxon>
        <taxon>Sar</taxon>
        <taxon>Stramenopiles</taxon>
        <taxon>Ochrophyta</taxon>
        <taxon>Bacillariophyta</taxon>
        <taxon>Bacillariophyceae</taxon>
        <taxon>Bacillariophycidae</taxon>
        <taxon>Naviculales</taxon>
        <taxon>Phaeodactylaceae</taxon>
        <taxon>Phaeodactylum</taxon>
    </lineage>
</organism>
<proteinExistence type="inferred from homology"/>
<sequence>MDILSLGWAALMTMFTFSLALTVWARNGF</sequence>
<reference key="1">
    <citation type="journal article" date="2007" name="Mol. Genet. Genomics">
        <title>Chloroplast genomes of the diatoms Phaeodactylum tricornutum and Thalassiosira pseudonana: comparison with other plastid genomes of the red lineage.</title>
        <authorList>
            <person name="Oudot-Le Secq M.-P."/>
            <person name="Grimwood J."/>
            <person name="Shapiro H."/>
            <person name="Armbrust E.V."/>
            <person name="Bowler C."/>
            <person name="Green B.R."/>
        </authorList>
    </citation>
    <scope>NUCLEOTIDE SEQUENCE [LARGE SCALE GENOMIC DNA]</scope>
    <source>
        <strain>CCAP 1055/1</strain>
    </source>
</reference>
<accession>A0T0A8</accession>
<evidence type="ECO:0000255" key="1">
    <source>
        <dbReference type="HAMAP-Rule" id="MF_00395"/>
    </source>
</evidence>
<keyword id="KW-0150">Chloroplast</keyword>
<keyword id="KW-0249">Electron transport</keyword>
<keyword id="KW-0472">Membrane</keyword>
<keyword id="KW-0602">Photosynthesis</keyword>
<keyword id="KW-0934">Plastid</keyword>
<keyword id="KW-1185">Reference proteome</keyword>
<keyword id="KW-0793">Thylakoid</keyword>
<keyword id="KW-0812">Transmembrane</keyword>
<keyword id="KW-1133">Transmembrane helix</keyword>
<keyword id="KW-0813">Transport</keyword>
<comment type="function">
    <text evidence="1">Component of the cytochrome b6-f complex, which mediates electron transfer between photosystem II (PSII) and photosystem I (PSI), cyclic electron flow around PSI, and state transitions.</text>
</comment>
<comment type="subunit">
    <text evidence="1">The 4 large subunits of the cytochrome b6-f complex are cytochrome b6, subunit IV (17 kDa polypeptide, PetD), cytochrome f and the Rieske protein, while the 4 small subunits are PetG, PetL, PetM and PetN. The complex functions as a dimer.</text>
</comment>
<comment type="subcellular location">
    <subcellularLocation>
        <location>Plastid</location>
        <location>Chloroplast thylakoid membrane</location>
        <topology>Single-pass membrane protein</topology>
    </subcellularLocation>
</comment>
<comment type="similarity">
    <text evidence="1">Belongs to the PetN family.</text>
</comment>
<geneLocation type="chloroplast"/>
<dbReference type="EMBL" id="EF067920">
    <property type="protein sequence ID" value="ABK20606.1"/>
    <property type="molecule type" value="Genomic_DNA"/>
</dbReference>
<dbReference type="RefSeq" id="YP_874383.1">
    <property type="nucleotide sequence ID" value="NC_008588.1"/>
</dbReference>
<dbReference type="SMR" id="A0T0A8"/>
<dbReference type="GeneID" id="4524700"/>
<dbReference type="InParanoid" id="A0T0A8"/>
<dbReference type="Proteomes" id="UP000000759">
    <property type="component" value="Chloroplast"/>
</dbReference>
<dbReference type="GO" id="GO:0009535">
    <property type="term" value="C:chloroplast thylakoid membrane"/>
    <property type="evidence" value="ECO:0007669"/>
    <property type="project" value="UniProtKB-SubCell"/>
</dbReference>
<dbReference type="GO" id="GO:0009512">
    <property type="term" value="C:cytochrome b6f complex"/>
    <property type="evidence" value="ECO:0007669"/>
    <property type="project" value="InterPro"/>
</dbReference>
<dbReference type="GO" id="GO:0045158">
    <property type="term" value="F:electron transporter, transferring electrons within cytochrome b6/f complex of photosystem II activity"/>
    <property type="evidence" value="ECO:0007669"/>
    <property type="project" value="InterPro"/>
</dbReference>
<dbReference type="GO" id="GO:0017004">
    <property type="term" value="P:cytochrome complex assembly"/>
    <property type="evidence" value="ECO:0007669"/>
    <property type="project" value="UniProtKB-UniRule"/>
</dbReference>
<dbReference type="GO" id="GO:0015979">
    <property type="term" value="P:photosynthesis"/>
    <property type="evidence" value="ECO:0007669"/>
    <property type="project" value="UniProtKB-KW"/>
</dbReference>
<dbReference type="HAMAP" id="MF_00395">
    <property type="entry name" value="Cytb6_f_PetN"/>
    <property type="match status" value="1"/>
</dbReference>
<dbReference type="InterPro" id="IPR036143">
    <property type="entry name" value="Cytochr_b6-f_cplx_su8_sf"/>
</dbReference>
<dbReference type="InterPro" id="IPR005497">
    <property type="entry name" value="Cytochrome_b6-f_cplx_su8"/>
</dbReference>
<dbReference type="Pfam" id="PF03742">
    <property type="entry name" value="PetN"/>
    <property type="match status" value="1"/>
</dbReference>
<dbReference type="SUPFAM" id="SSF103451">
    <property type="entry name" value="PetN subunit of the cytochrome b6f complex"/>
    <property type="match status" value="1"/>
</dbReference>